<evidence type="ECO:0000255" key="1">
    <source>
        <dbReference type="HAMAP-Rule" id="MF_01318"/>
    </source>
</evidence>
<evidence type="ECO:0000305" key="2"/>
<dbReference type="EMBL" id="AF120458">
    <property type="protein sequence ID" value="AAD24569.1"/>
    <property type="molecule type" value="Genomic_DNA"/>
</dbReference>
<dbReference type="SMR" id="Q9X521"/>
<dbReference type="STRING" id="1894.ADK78_20855"/>
<dbReference type="GO" id="GO:0015934">
    <property type="term" value="C:large ribosomal subunit"/>
    <property type="evidence" value="ECO:0007669"/>
    <property type="project" value="InterPro"/>
</dbReference>
<dbReference type="GO" id="GO:0019843">
    <property type="term" value="F:rRNA binding"/>
    <property type="evidence" value="ECO:0007669"/>
    <property type="project" value="UniProtKB-UniRule"/>
</dbReference>
<dbReference type="GO" id="GO:0003735">
    <property type="term" value="F:structural constituent of ribosome"/>
    <property type="evidence" value="ECO:0007669"/>
    <property type="project" value="InterPro"/>
</dbReference>
<dbReference type="GO" id="GO:0000049">
    <property type="term" value="F:tRNA binding"/>
    <property type="evidence" value="ECO:0007669"/>
    <property type="project" value="UniProtKB-KW"/>
</dbReference>
<dbReference type="GO" id="GO:0006417">
    <property type="term" value="P:regulation of translation"/>
    <property type="evidence" value="ECO:0007669"/>
    <property type="project" value="UniProtKB-KW"/>
</dbReference>
<dbReference type="GO" id="GO:0006412">
    <property type="term" value="P:translation"/>
    <property type="evidence" value="ECO:0007669"/>
    <property type="project" value="UniProtKB-UniRule"/>
</dbReference>
<dbReference type="CDD" id="cd00403">
    <property type="entry name" value="Ribosomal_L1"/>
    <property type="match status" value="1"/>
</dbReference>
<dbReference type="FunFam" id="3.40.50.790:FF:000001">
    <property type="entry name" value="50S ribosomal protein L1"/>
    <property type="match status" value="1"/>
</dbReference>
<dbReference type="Gene3D" id="3.30.190.20">
    <property type="match status" value="1"/>
</dbReference>
<dbReference type="Gene3D" id="3.40.50.790">
    <property type="match status" value="1"/>
</dbReference>
<dbReference type="HAMAP" id="MF_01318_B">
    <property type="entry name" value="Ribosomal_uL1_B"/>
    <property type="match status" value="1"/>
</dbReference>
<dbReference type="InterPro" id="IPR005878">
    <property type="entry name" value="Ribosom_uL1_bac-type"/>
</dbReference>
<dbReference type="InterPro" id="IPR002143">
    <property type="entry name" value="Ribosomal_uL1"/>
</dbReference>
<dbReference type="InterPro" id="IPR023674">
    <property type="entry name" value="Ribosomal_uL1-like"/>
</dbReference>
<dbReference type="InterPro" id="IPR028364">
    <property type="entry name" value="Ribosomal_uL1/biogenesis"/>
</dbReference>
<dbReference type="InterPro" id="IPR016095">
    <property type="entry name" value="Ribosomal_uL1_3-a/b-sand"/>
</dbReference>
<dbReference type="InterPro" id="IPR023673">
    <property type="entry name" value="Ribosomal_uL1_CS"/>
</dbReference>
<dbReference type="NCBIfam" id="TIGR01169">
    <property type="entry name" value="rplA_bact"/>
    <property type="match status" value="1"/>
</dbReference>
<dbReference type="PANTHER" id="PTHR36427">
    <property type="entry name" value="54S RIBOSOMAL PROTEIN L1, MITOCHONDRIAL"/>
    <property type="match status" value="1"/>
</dbReference>
<dbReference type="PANTHER" id="PTHR36427:SF3">
    <property type="entry name" value="LARGE RIBOSOMAL SUBUNIT PROTEIN UL1M"/>
    <property type="match status" value="1"/>
</dbReference>
<dbReference type="Pfam" id="PF00687">
    <property type="entry name" value="Ribosomal_L1"/>
    <property type="match status" value="1"/>
</dbReference>
<dbReference type="PIRSF" id="PIRSF002155">
    <property type="entry name" value="Ribosomal_L1"/>
    <property type="match status" value="1"/>
</dbReference>
<dbReference type="SUPFAM" id="SSF56808">
    <property type="entry name" value="Ribosomal protein L1"/>
    <property type="match status" value="1"/>
</dbReference>
<dbReference type="PROSITE" id="PS01199">
    <property type="entry name" value="RIBOSOMAL_L1"/>
    <property type="match status" value="1"/>
</dbReference>
<protein>
    <recommendedName>
        <fullName evidence="1">Large ribosomal subunit protein uL1</fullName>
    </recommendedName>
    <alternativeName>
        <fullName evidence="2">50S ribosomal protein L1</fullName>
    </alternativeName>
</protein>
<reference key="1">
    <citation type="submission" date="1999-01" db="EMBL/GenBank/DDBJ databases">
        <title>Cloning of the rplA gene encoding ribosomal protein L1 from Streptomyces aureofaciens, and its transcriptional analysis in the course of differentiation.</title>
        <authorList>
            <person name="Kormanec J."/>
            <person name="Novakova R."/>
            <person name="Klucar L."/>
            <person name="Homerova D."/>
            <person name="Sevcikova B."/>
            <person name="Sprusansky O."/>
        </authorList>
    </citation>
    <scope>NUCLEOTIDE SEQUENCE [GENOMIC DNA]</scope>
    <source>
        <strain>ATCC 10762 / DSM 40127 / CCM 3239 / JCM 4008 / LMG 5968 / NBRC 12843 / NCIMB 8234 / A-377</strain>
    </source>
</reference>
<name>RL1_KITAU</name>
<gene>
    <name evidence="1" type="primary">rplA</name>
</gene>
<sequence length="242" mass="26006">MKRSKTLRAADAKVDREKLYAPLEAVRLAKETSATKFDSTVEVAFRLGVDPRKADQMVRGTVNLPHGTGKTARVLVFATGDRAAAAEAAGADIVGDDELINEIAKGNRLNEFDAVVATPDLMGKVGRLGRVLGPRGLMPNPKTGTVTMDVAKAVTEIKGGKIEFRVDKHSNLHFIIGKVSFSDEKLVENYAAALDEIIRLKPSAAKGRYIKKAALSTTMGPGIQLDSNRTRNLLVEEDPAAV</sequence>
<keyword id="KW-0678">Repressor</keyword>
<keyword id="KW-0687">Ribonucleoprotein</keyword>
<keyword id="KW-0689">Ribosomal protein</keyword>
<keyword id="KW-0694">RNA-binding</keyword>
<keyword id="KW-0699">rRNA-binding</keyword>
<keyword id="KW-0810">Translation regulation</keyword>
<keyword id="KW-0820">tRNA-binding</keyword>
<proteinExistence type="inferred from homology"/>
<organism>
    <name type="scientific">Kitasatospora aureofaciens</name>
    <name type="common">Streptomyces aureofaciens</name>
    <dbReference type="NCBI Taxonomy" id="1894"/>
    <lineage>
        <taxon>Bacteria</taxon>
        <taxon>Bacillati</taxon>
        <taxon>Actinomycetota</taxon>
        <taxon>Actinomycetes</taxon>
        <taxon>Kitasatosporales</taxon>
        <taxon>Streptomycetaceae</taxon>
        <taxon>Kitasatospora</taxon>
    </lineage>
</organism>
<comment type="function">
    <text evidence="1">Binds directly to 23S rRNA. The L1 stalk is quite mobile in the ribosome, and is involved in E site tRNA release.</text>
</comment>
<comment type="function">
    <text evidence="1">Protein L1 is also a translational repressor protein, it controls the translation of the L11 operon by binding to its mRNA.</text>
</comment>
<comment type="subunit">
    <text evidence="1">Part of the 50S ribosomal subunit.</text>
</comment>
<comment type="similarity">
    <text evidence="1">Belongs to the universal ribosomal protein uL1 family.</text>
</comment>
<feature type="chain" id="PRO_0000125743" description="Large ribosomal subunit protein uL1">
    <location>
        <begin position="1"/>
        <end position="242"/>
    </location>
</feature>
<accession>Q9X521</accession>